<reference key="1">
    <citation type="journal article" date="1999" name="J. Cell Biol.">
        <title>Characterization of two related Drosophila gamma-tubulin complexes that differ in their ability to nucleate microtubules.</title>
        <authorList>
            <person name="Oegema K."/>
            <person name="Wiese C."/>
            <person name="Martin O.C."/>
            <person name="Milligan R.A."/>
            <person name="Iwamatsu A."/>
            <person name="Mitchison T.J."/>
            <person name="Zheng Y."/>
        </authorList>
    </citation>
    <scope>NUCLEOTIDE SEQUENCE [MRNA]</scope>
    <scope>PROTEIN SEQUENCE OF 24-36; 85-90; 202-227; 250-257; 277-302; 541-548; 616-626; 664-671; 799-804; 810-817 AND 863-880</scope>
</reference>
<reference key="2">
    <citation type="journal article" date="2000" name="Science">
        <title>The genome sequence of Drosophila melanogaster.</title>
        <authorList>
            <person name="Adams M.D."/>
            <person name="Celniker S.E."/>
            <person name="Holt R.A."/>
            <person name="Evans C.A."/>
            <person name="Gocayne J.D."/>
            <person name="Amanatides P.G."/>
            <person name="Scherer S.E."/>
            <person name="Li P.W."/>
            <person name="Hoskins R.A."/>
            <person name="Galle R.F."/>
            <person name="George R.A."/>
            <person name="Lewis S.E."/>
            <person name="Richards S."/>
            <person name="Ashburner M."/>
            <person name="Henderson S.N."/>
            <person name="Sutton G.G."/>
            <person name="Wortman J.R."/>
            <person name="Yandell M.D."/>
            <person name="Zhang Q."/>
            <person name="Chen L.X."/>
            <person name="Brandon R.C."/>
            <person name="Rogers Y.-H.C."/>
            <person name="Blazej R.G."/>
            <person name="Champe M."/>
            <person name="Pfeiffer B.D."/>
            <person name="Wan K.H."/>
            <person name="Doyle C."/>
            <person name="Baxter E.G."/>
            <person name="Helt G."/>
            <person name="Nelson C.R."/>
            <person name="Miklos G.L.G."/>
            <person name="Abril J.F."/>
            <person name="Agbayani A."/>
            <person name="An H.-J."/>
            <person name="Andrews-Pfannkoch C."/>
            <person name="Baldwin D."/>
            <person name="Ballew R.M."/>
            <person name="Basu A."/>
            <person name="Baxendale J."/>
            <person name="Bayraktaroglu L."/>
            <person name="Beasley E.M."/>
            <person name="Beeson K.Y."/>
            <person name="Benos P.V."/>
            <person name="Berman B.P."/>
            <person name="Bhandari D."/>
            <person name="Bolshakov S."/>
            <person name="Borkova D."/>
            <person name="Botchan M.R."/>
            <person name="Bouck J."/>
            <person name="Brokstein P."/>
            <person name="Brottier P."/>
            <person name="Burtis K.C."/>
            <person name="Busam D.A."/>
            <person name="Butler H."/>
            <person name="Cadieu E."/>
            <person name="Center A."/>
            <person name="Chandra I."/>
            <person name="Cherry J.M."/>
            <person name="Cawley S."/>
            <person name="Dahlke C."/>
            <person name="Davenport L.B."/>
            <person name="Davies P."/>
            <person name="de Pablos B."/>
            <person name="Delcher A."/>
            <person name="Deng Z."/>
            <person name="Mays A.D."/>
            <person name="Dew I."/>
            <person name="Dietz S.M."/>
            <person name="Dodson K."/>
            <person name="Doup L.E."/>
            <person name="Downes M."/>
            <person name="Dugan-Rocha S."/>
            <person name="Dunkov B.C."/>
            <person name="Dunn P."/>
            <person name="Durbin K.J."/>
            <person name="Evangelista C.C."/>
            <person name="Ferraz C."/>
            <person name="Ferriera S."/>
            <person name="Fleischmann W."/>
            <person name="Fosler C."/>
            <person name="Gabrielian A.E."/>
            <person name="Garg N.S."/>
            <person name="Gelbart W.M."/>
            <person name="Glasser K."/>
            <person name="Glodek A."/>
            <person name="Gong F."/>
            <person name="Gorrell J.H."/>
            <person name="Gu Z."/>
            <person name="Guan P."/>
            <person name="Harris M."/>
            <person name="Harris N.L."/>
            <person name="Harvey D.A."/>
            <person name="Heiman T.J."/>
            <person name="Hernandez J.R."/>
            <person name="Houck J."/>
            <person name="Hostin D."/>
            <person name="Houston K.A."/>
            <person name="Howland T.J."/>
            <person name="Wei M.-H."/>
            <person name="Ibegwam C."/>
            <person name="Jalali M."/>
            <person name="Kalush F."/>
            <person name="Karpen G.H."/>
            <person name="Ke Z."/>
            <person name="Kennison J.A."/>
            <person name="Ketchum K.A."/>
            <person name="Kimmel B.E."/>
            <person name="Kodira C.D."/>
            <person name="Kraft C.L."/>
            <person name="Kravitz S."/>
            <person name="Kulp D."/>
            <person name="Lai Z."/>
            <person name="Lasko P."/>
            <person name="Lei Y."/>
            <person name="Levitsky A.A."/>
            <person name="Li J.H."/>
            <person name="Li Z."/>
            <person name="Liang Y."/>
            <person name="Lin X."/>
            <person name="Liu X."/>
            <person name="Mattei B."/>
            <person name="McIntosh T.C."/>
            <person name="McLeod M.P."/>
            <person name="McPherson D."/>
            <person name="Merkulov G."/>
            <person name="Milshina N.V."/>
            <person name="Mobarry C."/>
            <person name="Morris J."/>
            <person name="Moshrefi A."/>
            <person name="Mount S.M."/>
            <person name="Moy M."/>
            <person name="Murphy B."/>
            <person name="Murphy L."/>
            <person name="Muzny D.M."/>
            <person name="Nelson D.L."/>
            <person name="Nelson D.R."/>
            <person name="Nelson K.A."/>
            <person name="Nixon K."/>
            <person name="Nusskern D.R."/>
            <person name="Pacleb J.M."/>
            <person name="Palazzolo M."/>
            <person name="Pittman G.S."/>
            <person name="Pan S."/>
            <person name="Pollard J."/>
            <person name="Puri V."/>
            <person name="Reese M.G."/>
            <person name="Reinert K."/>
            <person name="Remington K."/>
            <person name="Saunders R.D.C."/>
            <person name="Scheeler F."/>
            <person name="Shen H."/>
            <person name="Shue B.C."/>
            <person name="Siden-Kiamos I."/>
            <person name="Simpson M."/>
            <person name="Skupski M.P."/>
            <person name="Smith T.J."/>
            <person name="Spier E."/>
            <person name="Spradling A.C."/>
            <person name="Stapleton M."/>
            <person name="Strong R."/>
            <person name="Sun E."/>
            <person name="Svirskas R."/>
            <person name="Tector C."/>
            <person name="Turner R."/>
            <person name="Venter E."/>
            <person name="Wang A.H."/>
            <person name="Wang X."/>
            <person name="Wang Z.-Y."/>
            <person name="Wassarman D.A."/>
            <person name="Weinstock G.M."/>
            <person name="Weissenbach J."/>
            <person name="Williams S.M."/>
            <person name="Woodage T."/>
            <person name="Worley K.C."/>
            <person name="Wu D."/>
            <person name="Yang S."/>
            <person name="Yao Q.A."/>
            <person name="Ye J."/>
            <person name="Yeh R.-F."/>
            <person name="Zaveri J.S."/>
            <person name="Zhan M."/>
            <person name="Zhang G."/>
            <person name="Zhao Q."/>
            <person name="Zheng L."/>
            <person name="Zheng X.H."/>
            <person name="Zhong F.N."/>
            <person name="Zhong W."/>
            <person name="Zhou X."/>
            <person name="Zhu S.C."/>
            <person name="Zhu X."/>
            <person name="Smith H.O."/>
            <person name="Gibbs R.A."/>
            <person name="Myers E.W."/>
            <person name="Rubin G.M."/>
            <person name="Venter J.C."/>
        </authorList>
    </citation>
    <scope>NUCLEOTIDE SEQUENCE [LARGE SCALE GENOMIC DNA]</scope>
    <source>
        <strain>Berkeley</strain>
    </source>
</reference>
<reference key="3">
    <citation type="journal article" date="2002" name="Genome Biol.">
        <title>Annotation of the Drosophila melanogaster euchromatic genome: a systematic review.</title>
        <authorList>
            <person name="Misra S."/>
            <person name="Crosby M.A."/>
            <person name="Mungall C.J."/>
            <person name="Matthews B.B."/>
            <person name="Campbell K.S."/>
            <person name="Hradecky P."/>
            <person name="Huang Y."/>
            <person name="Kaminker J.S."/>
            <person name="Millburn G.H."/>
            <person name="Prochnik S.E."/>
            <person name="Smith C.D."/>
            <person name="Tupy J.L."/>
            <person name="Whitfield E.J."/>
            <person name="Bayraktaroglu L."/>
            <person name="Berman B.P."/>
            <person name="Bettencourt B.R."/>
            <person name="Celniker S.E."/>
            <person name="de Grey A.D.N.J."/>
            <person name="Drysdale R.A."/>
            <person name="Harris N.L."/>
            <person name="Richter J."/>
            <person name="Russo S."/>
            <person name="Schroeder A.J."/>
            <person name="Shu S.Q."/>
            <person name="Stapleton M."/>
            <person name="Yamada C."/>
            <person name="Ashburner M."/>
            <person name="Gelbart W.M."/>
            <person name="Rubin G.M."/>
            <person name="Lewis S.E."/>
        </authorList>
    </citation>
    <scope>GENOME REANNOTATION</scope>
    <source>
        <strain>Berkeley</strain>
    </source>
</reference>
<reference key="4">
    <citation type="journal article" date="2002" name="Genome Biol.">
        <title>A Drosophila full-length cDNA resource.</title>
        <authorList>
            <person name="Stapleton M."/>
            <person name="Carlson J.W."/>
            <person name="Brokstein P."/>
            <person name="Yu C."/>
            <person name="Champe M."/>
            <person name="George R.A."/>
            <person name="Guarin H."/>
            <person name="Kronmiller B."/>
            <person name="Pacleb J.M."/>
            <person name="Park S."/>
            <person name="Wan K.H."/>
            <person name="Rubin G.M."/>
            <person name="Celniker S.E."/>
        </authorList>
    </citation>
    <scope>NUCLEOTIDE SEQUENCE [LARGE SCALE MRNA]</scope>
    <source>
        <strain>Berkeley</strain>
        <tissue>Ovary</tissue>
    </source>
</reference>
<reference key="5">
    <citation type="journal article" date="2020" name="Nat. Cell Biol.">
        <title>A perinuclear microtubule-organizing centre controls nuclear positioning and basement membrane secretion.</title>
        <authorList>
            <person name="Zheng Y."/>
            <person name="Buchwalter R.A."/>
            <person name="Zheng C."/>
            <person name="Wight E.M."/>
            <person name="Chen J.V."/>
            <person name="Megraw T.L."/>
        </authorList>
    </citation>
    <scope>SUBCELLULAR LOCATION</scope>
    <scope>DISRUPTION PHENOTYPE</scope>
</reference>
<sequence length="917" mass="103707">MSQDRIAGIDVATNSTDISNIINEMIICIKGKQMPEVHEKAMDHLSKMIAANSRVIRDSNMLTERECVQKIMKLLSARNKKEEGKTVSDHFNELYRKLTLTKCDPHMRHSLMTHLLTMTDNSDAEKAVASEDPRTQCDNLTQILVSRLNSISSSIASLNEMGVVNGNGVGAAAVTGAAAVTGAAAVTGAAAVTGAAASHSYDATQSSIGLRKQSLPNYLDATKMLPESRHDIVMSAIYSFTGVQGKYLKKDVVTGRFKLDQQNIKFLTTGQAGMLLRLSELGYYHDRVVKFSDVSTGFNAIGSMGQALISKLKEELANFHGQVAMLHDEMQRFRQASVNGIANKGKKDSGPDAGDEMTLFKLLAWYIKPLHRMQWLTKIADACQVKKGGDLASTVYDFLDNGNDMVNKLVEDLLTAICGPLVRMISKWILEGGISDMHREFFVKSIKDVGVDRLWHDKFRLRLPMLPKFVPMDMANKILMTGKSINFLREICEEQGMMKERDELMKVMESSASQIFSYTPDTSWHAAVETCYQQTSKHVLDIMVGPHKLLDHLHGMRRYLLLGQGDFISILIENMKNELERPGLDIYANDLTSMLDSALRCTNAQYDDPDILNHLDVIVQRPFNGDIGWNIISLQYIVHGPLAAMLESTMPTYKVLFKPLWRMKHMEFVLSMKIWKEQMGNAKALRTMKSEIGKASHRLNLFTSEIMHFIHQMQYYVLFEVIECNWVELQKKMQKATTLDEILEAHEKFLQTILVGCFVSNKASVEHSLEVVYENIIELEKWQSSFYKDCFKELNARKELSKIVEKSEKKGVYGLTNKMILQRDQEAKIFAEKMDIACRGLEVIATDYEKAVSTFLMSLNSSDDPNLQLFGTRLDFNEYYKKRDTNLSKPLTFEHMRMSNVFAVNSRFVICTPSTQE</sequence>
<dbReference type="EMBL" id="AF118380">
    <property type="protein sequence ID" value="AAD27817.1"/>
    <property type="molecule type" value="mRNA"/>
</dbReference>
<dbReference type="EMBL" id="AE014298">
    <property type="protein sequence ID" value="AAF48309.1"/>
    <property type="molecule type" value="Genomic_DNA"/>
</dbReference>
<dbReference type="EMBL" id="AY069292">
    <property type="protein sequence ID" value="AAL39437.1"/>
    <property type="molecule type" value="mRNA"/>
</dbReference>
<dbReference type="RefSeq" id="NP_524919.2">
    <property type="nucleotide sequence ID" value="NM_080180.4"/>
</dbReference>
<dbReference type="SMR" id="Q9XYP8"/>
<dbReference type="BioGRID" id="71426">
    <property type="interactions" value="14"/>
</dbReference>
<dbReference type="ComplexPortal" id="CPX-2776">
    <property type="entry name" value="Gamma-tubulin small complex"/>
</dbReference>
<dbReference type="ComplexPortal" id="CPX-2801">
    <property type="entry name" value="Gamma-tubulin ring complex"/>
</dbReference>
<dbReference type="DIP" id="DIP-19100N"/>
<dbReference type="FunCoup" id="Q9XYP8">
    <property type="interactions" value="1824"/>
</dbReference>
<dbReference type="IntAct" id="Q9XYP8">
    <property type="interactions" value="7"/>
</dbReference>
<dbReference type="MINT" id="Q9XYP8"/>
<dbReference type="STRING" id="7227.FBpp0073672"/>
<dbReference type="PaxDb" id="7227-FBpp0073672"/>
<dbReference type="EnsemblMetazoa" id="FBtr0073841">
    <property type="protein sequence ID" value="FBpp0073672"/>
    <property type="gene ID" value="FBgn0001612"/>
</dbReference>
<dbReference type="GeneID" id="48481"/>
<dbReference type="KEGG" id="dme:Dmel_CG10988"/>
<dbReference type="AGR" id="FB:FBgn0001612"/>
<dbReference type="CTD" id="48481"/>
<dbReference type="FlyBase" id="FBgn0001612">
    <property type="gene designation" value="Grip91"/>
</dbReference>
<dbReference type="VEuPathDB" id="VectorBase:FBgn0001612"/>
<dbReference type="eggNOG" id="KOG2000">
    <property type="taxonomic scope" value="Eukaryota"/>
</dbReference>
<dbReference type="GeneTree" id="ENSGT00940000157872"/>
<dbReference type="HOGENOM" id="CLU_003736_3_0_1"/>
<dbReference type="InParanoid" id="Q9XYP8"/>
<dbReference type="OMA" id="FVNNLWS"/>
<dbReference type="OrthoDB" id="5860513at2759"/>
<dbReference type="PhylomeDB" id="Q9XYP8"/>
<dbReference type="SignaLink" id="Q9XYP8"/>
<dbReference type="BioGRID-ORCS" id="48481">
    <property type="hits" value="1 hit in 1 CRISPR screen"/>
</dbReference>
<dbReference type="CD-CODE" id="2838EF58">
    <property type="entry name" value="Centrosome"/>
</dbReference>
<dbReference type="GenomeRNAi" id="48481"/>
<dbReference type="PRO" id="PR:Q9XYP8"/>
<dbReference type="Proteomes" id="UP000000803">
    <property type="component" value="Chromosome X"/>
</dbReference>
<dbReference type="Bgee" id="FBgn0001612">
    <property type="expression patterns" value="Expressed in cleaving embryo and 58 other cell types or tissues"/>
</dbReference>
<dbReference type="ExpressionAtlas" id="Q9XYP8">
    <property type="expression patterns" value="baseline and differential"/>
</dbReference>
<dbReference type="GO" id="GO:0005813">
    <property type="term" value="C:centrosome"/>
    <property type="evidence" value="ECO:0007669"/>
    <property type="project" value="UniProtKB-SubCell"/>
</dbReference>
<dbReference type="GO" id="GO:0000930">
    <property type="term" value="C:gamma-tubulin complex"/>
    <property type="evidence" value="ECO:0000318"/>
    <property type="project" value="GO_Central"/>
</dbReference>
<dbReference type="GO" id="GO:0000931">
    <property type="term" value="C:gamma-tubulin ring complex"/>
    <property type="evidence" value="ECO:0000314"/>
    <property type="project" value="FlyBase"/>
</dbReference>
<dbReference type="GO" id="GO:0008275">
    <property type="term" value="C:gamma-tubulin small complex"/>
    <property type="evidence" value="ECO:0000314"/>
    <property type="project" value="UniProtKB"/>
</dbReference>
<dbReference type="GO" id="GO:0005874">
    <property type="term" value="C:microtubule"/>
    <property type="evidence" value="ECO:0007669"/>
    <property type="project" value="UniProtKB-KW"/>
</dbReference>
<dbReference type="GO" id="GO:0048471">
    <property type="term" value="C:perinuclear region of cytoplasm"/>
    <property type="evidence" value="ECO:0007669"/>
    <property type="project" value="UniProtKB-SubCell"/>
</dbReference>
<dbReference type="GO" id="GO:0000922">
    <property type="term" value="C:spindle pole"/>
    <property type="evidence" value="ECO:0007669"/>
    <property type="project" value="InterPro"/>
</dbReference>
<dbReference type="GO" id="GO:0043015">
    <property type="term" value="F:gamma-tubulin binding"/>
    <property type="evidence" value="ECO:0000314"/>
    <property type="project" value="FlyBase"/>
</dbReference>
<dbReference type="GO" id="GO:0031122">
    <property type="term" value="P:cytoplasmic microtubule organization"/>
    <property type="evidence" value="ECO:0000318"/>
    <property type="project" value="GO_Central"/>
</dbReference>
<dbReference type="GO" id="GO:0007140">
    <property type="term" value="P:male meiotic nuclear division"/>
    <property type="evidence" value="ECO:0000315"/>
    <property type="project" value="FlyBase"/>
</dbReference>
<dbReference type="GO" id="GO:0051321">
    <property type="term" value="P:meiotic cell cycle"/>
    <property type="evidence" value="ECO:0000318"/>
    <property type="project" value="GO_Central"/>
</dbReference>
<dbReference type="GO" id="GO:0000212">
    <property type="term" value="P:meiotic spindle organization"/>
    <property type="evidence" value="ECO:0000315"/>
    <property type="project" value="FlyBase"/>
</dbReference>
<dbReference type="GO" id="GO:0007020">
    <property type="term" value="P:microtubule nucleation"/>
    <property type="evidence" value="ECO:0000314"/>
    <property type="project" value="UniProtKB"/>
</dbReference>
<dbReference type="GO" id="GO:0000278">
    <property type="term" value="P:mitotic cell cycle"/>
    <property type="evidence" value="ECO:0000318"/>
    <property type="project" value="GO_Central"/>
</dbReference>
<dbReference type="GO" id="GO:0090221">
    <property type="term" value="P:mitotic spindle-templated microtubule nucleation"/>
    <property type="evidence" value="ECO:0000314"/>
    <property type="project" value="FlyBase"/>
</dbReference>
<dbReference type="GO" id="GO:0051225">
    <property type="term" value="P:spindle assembly"/>
    <property type="evidence" value="ECO:0000318"/>
    <property type="project" value="GO_Central"/>
</dbReference>
<dbReference type="Gene3D" id="1.20.120.1900">
    <property type="entry name" value="Gamma-tubulin complex, C-terminal domain"/>
    <property type="match status" value="1"/>
</dbReference>
<dbReference type="InterPro" id="IPR007259">
    <property type="entry name" value="GCP"/>
</dbReference>
<dbReference type="InterPro" id="IPR040457">
    <property type="entry name" value="GCP_C"/>
</dbReference>
<dbReference type="InterPro" id="IPR042241">
    <property type="entry name" value="GCP_C_sf"/>
</dbReference>
<dbReference type="InterPro" id="IPR041470">
    <property type="entry name" value="GCP_N"/>
</dbReference>
<dbReference type="PANTHER" id="PTHR19302">
    <property type="entry name" value="GAMMA TUBULIN COMPLEX PROTEIN"/>
    <property type="match status" value="1"/>
</dbReference>
<dbReference type="PANTHER" id="PTHR19302:SF14">
    <property type="entry name" value="GAMMA-TUBULIN COMPLEX COMPONENT 3"/>
    <property type="match status" value="1"/>
</dbReference>
<dbReference type="Pfam" id="PF04130">
    <property type="entry name" value="GCP_C_terminal"/>
    <property type="match status" value="1"/>
</dbReference>
<dbReference type="Pfam" id="PF17681">
    <property type="entry name" value="GCP_N_terminal"/>
    <property type="match status" value="1"/>
</dbReference>
<keyword id="KW-0963">Cytoplasm</keyword>
<keyword id="KW-0206">Cytoskeleton</keyword>
<keyword id="KW-0903">Direct protein sequencing</keyword>
<keyword id="KW-0493">Microtubule</keyword>
<keyword id="KW-1185">Reference proteome</keyword>
<protein>
    <recommendedName>
        <fullName evidence="4">Gamma-tubulin complex component 3</fullName>
    </recommendedName>
    <alternativeName>
        <fullName evidence="2">Gamma-ring complex protein 91 kDa</fullName>
    </alternativeName>
</protein>
<feature type="chain" id="PRO_0000078121" description="Gamma-tubulin complex component 3">
    <location>
        <begin position="1"/>
        <end position="917"/>
    </location>
</feature>
<feature type="sequence conflict" description="In Ref. 1; AAD27817." evidence="3" ref="1">
    <original>N</original>
    <variation>Y</variation>
    <location>
        <position position="79"/>
    </location>
</feature>
<feature type="sequence conflict" description="In Ref. 1; AAD27817." evidence="3" ref="1">
    <original>M</original>
    <variation>I</variation>
    <location>
        <position position="118"/>
    </location>
</feature>
<feature type="sequence conflict" description="In Ref. 1; AAD27817." evidence="3" ref="1">
    <original>L</original>
    <variation>F</variation>
    <location>
        <position position="413"/>
    </location>
</feature>
<feature type="sequence conflict" description="In Ref. 1; AAD27817." evidence="3" ref="1">
    <original>L</original>
    <variation>F</variation>
    <location>
        <position position="479"/>
    </location>
</feature>
<feature type="sequence conflict" description="In Ref. 1; AAD27817." evidence="3" ref="1">
    <original>G</original>
    <variation>A</variation>
    <location>
        <position position="583"/>
    </location>
</feature>
<evidence type="ECO:0000269" key="1">
    <source>
    </source>
</evidence>
<evidence type="ECO:0000303" key="2">
    <source>
    </source>
</evidence>
<evidence type="ECO:0000305" key="3"/>
<evidence type="ECO:0000312" key="4">
    <source>
        <dbReference type="FlyBase" id="FBgn0001612"/>
    </source>
</evidence>
<organism>
    <name type="scientific">Drosophila melanogaster</name>
    <name type="common">Fruit fly</name>
    <dbReference type="NCBI Taxonomy" id="7227"/>
    <lineage>
        <taxon>Eukaryota</taxon>
        <taxon>Metazoa</taxon>
        <taxon>Ecdysozoa</taxon>
        <taxon>Arthropoda</taxon>
        <taxon>Hexapoda</taxon>
        <taxon>Insecta</taxon>
        <taxon>Pterygota</taxon>
        <taxon>Neoptera</taxon>
        <taxon>Endopterygota</taxon>
        <taxon>Diptera</taxon>
        <taxon>Brachycera</taxon>
        <taxon>Muscomorpha</taxon>
        <taxon>Ephydroidea</taxon>
        <taxon>Drosophilidae</taxon>
        <taxon>Drosophila</taxon>
        <taxon>Sophophora</taxon>
    </lineage>
</organism>
<gene>
    <name evidence="2 4" type="primary">Grip91</name>
    <name evidence="2" type="synonym">l(1)dd4</name>
    <name evidence="4" type="ORF">CG10988</name>
</gene>
<accession>Q9XYP8</accession>
<accession>Q9VY94</accession>
<comment type="subunit">
    <text>Gamma-tubulin small complex (Gamma TuSC) is a heterotetrameric complex which contains two molecules of gamma-tubulin, and one molecule each of Dgrip84 and Dgrip91. The gamma-tubulin in this complex binds preferentially to GDP over GTP.</text>
</comment>
<comment type="subcellular location">
    <subcellularLocation>
        <location evidence="3">Cytoplasm</location>
        <location evidence="3">Cytoskeleton</location>
        <location evidence="3">Microtubule organizing center</location>
        <location evidence="3">Centrosome</location>
    </subcellularLocation>
    <subcellularLocation>
        <location evidence="1">Cytoplasm</location>
        <location evidence="1">Cytoskeleton</location>
        <location evidence="1">Microtubule organizing center</location>
    </subcellularLocation>
    <subcellularLocation>
        <location evidence="1">Cytoplasm</location>
        <location evidence="1">Perinuclear region</location>
    </subcellularLocation>
    <text evidence="1">In the fat body, localizes to a perinuclear non-centrosomal microtubule-organizing centers (ncMTOCs).</text>
</comment>
<comment type="disruption phenotype">
    <text evidence="1">RNAi-mediated knockdown has no effect on nuclear positioning in fat body cells.</text>
</comment>
<comment type="similarity">
    <text evidence="3">Belongs to the TUBGCP family.</text>
</comment>
<proteinExistence type="evidence at protein level"/>
<name>GCP3_DROME</name>